<reference key="1">
    <citation type="journal article" date="2011" name="Stand. Genomic Sci.">
        <title>Complete genome sequence of the filamentous gliding predatory bacterium Herpetosiphon aurantiacus type strain (114-95(T)).</title>
        <authorList>
            <person name="Kiss H."/>
            <person name="Nett M."/>
            <person name="Domin N."/>
            <person name="Martin K."/>
            <person name="Maresca J.A."/>
            <person name="Copeland A."/>
            <person name="Lapidus A."/>
            <person name="Lucas S."/>
            <person name="Berry K.W."/>
            <person name="Glavina Del Rio T."/>
            <person name="Dalin E."/>
            <person name="Tice H."/>
            <person name="Pitluck S."/>
            <person name="Richardson P."/>
            <person name="Bruce D."/>
            <person name="Goodwin L."/>
            <person name="Han C."/>
            <person name="Detter J.C."/>
            <person name="Schmutz J."/>
            <person name="Brettin T."/>
            <person name="Land M."/>
            <person name="Hauser L."/>
            <person name="Kyrpides N.C."/>
            <person name="Ivanova N."/>
            <person name="Goeker M."/>
            <person name="Woyke T."/>
            <person name="Klenk H.P."/>
            <person name="Bryant D.A."/>
        </authorList>
    </citation>
    <scope>NUCLEOTIDE SEQUENCE [LARGE SCALE GENOMIC DNA]</scope>
    <source>
        <strain>ATCC 23779 / DSM 785 / 114-95</strain>
    </source>
</reference>
<evidence type="ECO:0000255" key="1">
    <source>
        <dbReference type="HAMAP-Rule" id="MF_01342"/>
    </source>
</evidence>
<evidence type="ECO:0000305" key="2"/>
<dbReference type="EMBL" id="CP000875">
    <property type="protein sequence ID" value="ABX07552.1"/>
    <property type="molecule type" value="Genomic_DNA"/>
</dbReference>
<dbReference type="SMR" id="A9B419"/>
<dbReference type="FunCoup" id="A9B419">
    <property type="interactions" value="440"/>
</dbReference>
<dbReference type="STRING" id="316274.Haur_4922"/>
<dbReference type="KEGG" id="hau:Haur_4922"/>
<dbReference type="eggNOG" id="COG0197">
    <property type="taxonomic scope" value="Bacteria"/>
</dbReference>
<dbReference type="HOGENOM" id="CLU_078858_2_1_0"/>
<dbReference type="InParanoid" id="A9B419"/>
<dbReference type="Proteomes" id="UP000000787">
    <property type="component" value="Chromosome"/>
</dbReference>
<dbReference type="GO" id="GO:0022625">
    <property type="term" value="C:cytosolic large ribosomal subunit"/>
    <property type="evidence" value="ECO:0007669"/>
    <property type="project" value="TreeGrafter"/>
</dbReference>
<dbReference type="GO" id="GO:0019843">
    <property type="term" value="F:rRNA binding"/>
    <property type="evidence" value="ECO:0007669"/>
    <property type="project" value="UniProtKB-UniRule"/>
</dbReference>
<dbReference type="GO" id="GO:0003735">
    <property type="term" value="F:structural constituent of ribosome"/>
    <property type="evidence" value="ECO:0007669"/>
    <property type="project" value="InterPro"/>
</dbReference>
<dbReference type="GO" id="GO:0000049">
    <property type="term" value="F:tRNA binding"/>
    <property type="evidence" value="ECO:0007669"/>
    <property type="project" value="UniProtKB-KW"/>
</dbReference>
<dbReference type="GO" id="GO:0006412">
    <property type="term" value="P:translation"/>
    <property type="evidence" value="ECO:0007669"/>
    <property type="project" value="UniProtKB-UniRule"/>
</dbReference>
<dbReference type="CDD" id="cd01433">
    <property type="entry name" value="Ribosomal_L16_L10e"/>
    <property type="match status" value="1"/>
</dbReference>
<dbReference type="FunFam" id="3.90.1170.10:FF:000001">
    <property type="entry name" value="50S ribosomal protein L16"/>
    <property type="match status" value="1"/>
</dbReference>
<dbReference type="Gene3D" id="3.90.1170.10">
    <property type="entry name" value="Ribosomal protein L10e/L16"/>
    <property type="match status" value="1"/>
</dbReference>
<dbReference type="HAMAP" id="MF_01342">
    <property type="entry name" value="Ribosomal_uL16"/>
    <property type="match status" value="1"/>
</dbReference>
<dbReference type="InterPro" id="IPR047873">
    <property type="entry name" value="Ribosomal_uL16"/>
</dbReference>
<dbReference type="InterPro" id="IPR000114">
    <property type="entry name" value="Ribosomal_uL16_bact-type"/>
</dbReference>
<dbReference type="InterPro" id="IPR020798">
    <property type="entry name" value="Ribosomal_uL16_CS"/>
</dbReference>
<dbReference type="InterPro" id="IPR016180">
    <property type="entry name" value="Ribosomal_uL16_dom"/>
</dbReference>
<dbReference type="InterPro" id="IPR036920">
    <property type="entry name" value="Ribosomal_uL16_sf"/>
</dbReference>
<dbReference type="NCBIfam" id="TIGR01164">
    <property type="entry name" value="rplP_bact"/>
    <property type="match status" value="1"/>
</dbReference>
<dbReference type="PANTHER" id="PTHR12220">
    <property type="entry name" value="50S/60S RIBOSOMAL PROTEIN L16"/>
    <property type="match status" value="1"/>
</dbReference>
<dbReference type="PANTHER" id="PTHR12220:SF13">
    <property type="entry name" value="LARGE RIBOSOMAL SUBUNIT PROTEIN UL16M"/>
    <property type="match status" value="1"/>
</dbReference>
<dbReference type="Pfam" id="PF00252">
    <property type="entry name" value="Ribosomal_L16"/>
    <property type="match status" value="1"/>
</dbReference>
<dbReference type="PRINTS" id="PR00060">
    <property type="entry name" value="RIBOSOMALL16"/>
</dbReference>
<dbReference type="SUPFAM" id="SSF54686">
    <property type="entry name" value="Ribosomal protein L16p/L10e"/>
    <property type="match status" value="1"/>
</dbReference>
<dbReference type="PROSITE" id="PS00586">
    <property type="entry name" value="RIBOSOMAL_L16_1"/>
    <property type="match status" value="1"/>
</dbReference>
<protein>
    <recommendedName>
        <fullName evidence="1">Large ribosomal subunit protein uL16</fullName>
    </recommendedName>
    <alternativeName>
        <fullName evidence="2">50S ribosomal protein L16</fullName>
    </alternativeName>
</protein>
<organism>
    <name type="scientific">Herpetosiphon aurantiacus (strain ATCC 23779 / DSM 785 / 114-95)</name>
    <dbReference type="NCBI Taxonomy" id="316274"/>
    <lineage>
        <taxon>Bacteria</taxon>
        <taxon>Bacillati</taxon>
        <taxon>Chloroflexota</taxon>
        <taxon>Chloroflexia</taxon>
        <taxon>Herpetosiphonales</taxon>
        <taxon>Herpetosiphonaceae</taxon>
        <taxon>Herpetosiphon</taxon>
    </lineage>
</organism>
<name>RL16_HERA2</name>
<proteinExistence type="inferred from homology"/>
<comment type="function">
    <text evidence="1">Binds 23S rRNA and is also seen to make contacts with the A and possibly P site tRNAs.</text>
</comment>
<comment type="subunit">
    <text evidence="1">Part of the 50S ribosomal subunit.</text>
</comment>
<comment type="similarity">
    <text evidence="1">Belongs to the universal ribosomal protein uL16 family.</text>
</comment>
<keyword id="KW-0687">Ribonucleoprotein</keyword>
<keyword id="KW-0689">Ribosomal protein</keyword>
<keyword id="KW-0694">RNA-binding</keyword>
<keyword id="KW-0699">rRNA-binding</keyword>
<keyword id="KW-0820">tRNA-binding</keyword>
<gene>
    <name evidence="1" type="primary">rplP</name>
    <name type="ordered locus">Haur_4922</name>
</gene>
<feature type="chain" id="PRO_1000142983" description="Large ribosomal subunit protein uL16">
    <location>
        <begin position="1"/>
        <end position="145"/>
    </location>
</feature>
<sequence length="145" mass="16228">MLMPKQMKYRRPHRPRNIKGIAQRGATVAFGDFGLVSLEAGWITSRQIESARRTITNYVKRGGKVWIRIFPDRPITQKPAETRMGSGKGSVEYYVAVIKPGRVLFELNGVPEDVAQEALRRAAQKLPVKCKFVTKASQEVGSNEG</sequence>
<accession>A9B419</accession>